<comment type="function">
    <text evidence="5 7 8">Adapter protein involved in endocytic recycling of synaptic vesicles membranes. May act by mediating the retrieval of synaptotagmin protein Syt from the plasma membrane, thereby facilitating the internalization of multiple synaptic vesicles from the plasma membrane.</text>
</comment>
<comment type="subunit">
    <text evidence="6">Interacts with the second C2 domain of Syt.</text>
</comment>
<comment type="interaction">
    <interactant intactId="EBI-604879">
        <id>Q24212</id>
    </interactant>
    <interactant intactId="EBI-484504">
        <id>P21521</id>
        <label>Syt1</label>
    </interactant>
    <organismsDiffer>false</organismsDiffer>
    <experiments>5</experiments>
</comment>
<comment type="subcellular location">
    <subcellularLocation>
        <location evidence="5 7">Cytoplasm</location>
    </subcellularLocation>
    <subcellularLocation>
        <location evidence="5 7">Synapse</location>
    </subcellularLocation>
    <text evidence="5 7">Colocalizes with synaptic vesicle pools. Colocalizes with the endocytic network within synaptic boutons.</text>
</comment>
<comment type="developmental stage">
    <text evidence="5">Present at synaptic connections both in the CNS and in neuromuscular junctions in the mature embryo (20-22h) and throughout larval development. In the third instar larva, it is expressed in all synaptic bouton types, including I, II and III boutons.</text>
</comment>
<comment type="domain">
    <text evidence="1">The Asn-Pro-Phe (NPF) motifs, which are found in proteins involved in the endocytic pathway, are known to interact with the EH domain.</text>
</comment>
<comment type="RNA editing">
    <location>
        <position position="1186" evidence="9"/>
    </location>
    <text>Partially edited.</text>
</comment>
<comment type="miscellaneous">
    <text>StnA, which is involved in the same pathway, is derived from the same bicistronic transcript that encodes these two different proteins.</text>
</comment>
<comment type="similarity">
    <text evidence="11">Belongs to the Stoned B family.</text>
</comment>
<name>STNB_DROME</name>
<evidence type="ECO:0000250" key="1"/>
<evidence type="ECO:0000255" key="2">
    <source>
        <dbReference type="PROSITE-ProRule" id="PRU00403"/>
    </source>
</evidence>
<evidence type="ECO:0000255" key="3">
    <source>
        <dbReference type="PROSITE-ProRule" id="PRU00404"/>
    </source>
</evidence>
<evidence type="ECO:0000256" key="4">
    <source>
        <dbReference type="SAM" id="MobiDB-lite"/>
    </source>
</evidence>
<evidence type="ECO:0000269" key="5">
    <source>
    </source>
</evidence>
<evidence type="ECO:0000269" key="6">
    <source>
    </source>
</evidence>
<evidence type="ECO:0000269" key="7">
    <source>
    </source>
</evidence>
<evidence type="ECO:0000269" key="8">
    <source>
    </source>
</evidence>
<evidence type="ECO:0000269" key="9">
    <source>
    </source>
</evidence>
<evidence type="ECO:0000269" key="10">
    <source>
    </source>
</evidence>
<evidence type="ECO:0000305" key="11"/>
<accession>Q24212</accession>
<accession>A4V4V9</accession>
<accession>Q7PLF4</accession>
<accession>Q9W5J3</accession>
<sequence>MANPFLMDEDLDGCDAAANPFLMQSEPEPSSDNPFMAATVASNPFAFGADDLELGAEPEAEATHDNDLDPAMSFFGTTIEAEDDTLSLKSGAEEEDEGKKPPQSQPQLQSHAHPHPPPPRPLVPPQSTQDLISTVSSQLDETSSELLGRIPATRSPSPVSMRDLHSPSPTPDSGLADLLDVSVDSGSSAHTQGIEADLISGVAGGVRLDNPFAVPTAVPNIQAAVPLPATPIKQPPRPPPPRPAPPRPAPPGQAAPQRPPPPLAAVNPPPAAPEADDLLDMFGTTACKPAKPPPPKSKEDILSLFEQPHVPLSQPASKPDLLHDDLDETIGEGEPPEQEEPDTEQSNEISSRDEPVFTSLLIRPDESTHDITSQPQAATGLERQVNNMAAPSGTASTQRATTPDIEITTVEDLPRSDDEDEPEAMQEPETETKPQIEPDTEPEIVSEHSPPTERLVTQAALVDGELIAAEPEPEEMDTGLDFPLASSGQLSANPFASPDEEEPNFAPMPAAVANIFAVNDPDSQMETPKAPSHTANIFASDPDEFDAFSAKFDSVKKDNISIMDGFGGSGAITPTGGDAWGGSAFGSTTISANACGDTNSADDGFGNDDDDFYAMQAPARADSVESVDKDFSVVIRPMAEETSGVAPQLAPPPPPARGVNQAQTTSLPGLTVNPFEDVSGFPAPGLPPTDGTAIKRTDSQDTPQTPLYDEDVSQPLEEFPRLHYIGPGWEMQLRQPNKKKITGQRFWKKIVVRLVVQNDVPVVQLLNQAGDKQPFQELPLQPSYSVSEIGAQQYDQFGKIFTMKLQYIFYKERPGVRPGQVTKAERITNKLTKFAQYAIAGDYEGVKEFGSDLKKLGLPVEHAPQSSQLFKIGSMNYEDMKQFSVCIEEALFKIPALRERALTYKMEEVQVTAVDEITVEQDFEGKILKQIARVRLFFLAFLTGMPTIELGVNDMWRQGKEVVGRHDIIPVATEEWIRLEAVEFHSVVNQKEYERTRTIKFQPPDANYIELLRFRVRPPKNRELPLQLKATWCVSGNKVELRADILVPGFTSRKLGQIPCEDVSVRFPIPECWIYLFRVEKHFRYGSVKSAHRRTGKIKGIERILGAVDTLQESLIEVTSGQAKYEHHHRAIVWRCPRLPKEGQGAYTTHQLVCRMALTSYDQIPSELAPYAFVEFTMPATQVSHTTVRSVSVQDSDGDEPPEKYVRYLARHEYKVGIETTHGESTNAYLAATRPIREEPPTTATKPTASPVAPSDSDTDSN</sequence>
<proteinExistence type="evidence at protein level"/>
<gene>
    <name type="primary">stnB</name>
    <name type="ORF">CG12473</name>
</gene>
<dbReference type="EMBL" id="U54982">
    <property type="protein sequence ID" value="AAC16666.1"/>
    <property type="molecule type" value="mRNA"/>
</dbReference>
<dbReference type="EMBL" id="AE014298">
    <property type="protein sequence ID" value="ABI31012.2"/>
    <property type="molecule type" value="Genomic_DNA"/>
</dbReference>
<dbReference type="EMBL" id="AE014298">
    <property type="protein sequence ID" value="EAA46059.3"/>
    <property type="molecule type" value="Genomic_DNA"/>
</dbReference>
<dbReference type="PIR" id="T13353">
    <property type="entry name" value="T13353"/>
</dbReference>
<dbReference type="RefSeq" id="NP_001036318.2">
    <property type="nucleotide sequence ID" value="NM_001042853.3"/>
</dbReference>
<dbReference type="RefSeq" id="NP_001036319.2">
    <property type="nucleotide sequence ID" value="NM_001042854.3"/>
</dbReference>
<dbReference type="RefSeq" id="NP_001285539.1">
    <property type="nucleotide sequence ID" value="NM_001298610.1"/>
</dbReference>
<dbReference type="BioGRID" id="607063">
    <property type="interactions" value="3"/>
</dbReference>
<dbReference type="ELM" id="Q24212"/>
<dbReference type="FunCoup" id="Q24212">
    <property type="interactions" value="7"/>
</dbReference>
<dbReference type="IntAct" id="Q24212">
    <property type="interactions" value="4"/>
</dbReference>
<dbReference type="STRING" id="7227.FBpp0310530"/>
<dbReference type="GlyGen" id="Q24212">
    <property type="glycosylation" value="2 sites"/>
</dbReference>
<dbReference type="iPTMnet" id="Q24212"/>
<dbReference type="PaxDb" id="7227-FBpp0291230"/>
<dbReference type="EnsemblMetazoa" id="FBtr0302020">
    <property type="protein sequence ID" value="FBpp0291230"/>
    <property type="gene ID" value="FBgn0016975"/>
</dbReference>
<dbReference type="EnsemblMetazoa" id="FBtr0302021">
    <property type="protein sequence ID" value="FBpp0291231"/>
    <property type="gene ID" value="FBgn0016975"/>
</dbReference>
<dbReference type="EnsemblMetazoa" id="FBtr0344111">
    <property type="protein sequence ID" value="FBpp0310530"/>
    <property type="gene ID" value="FBgn0016975"/>
</dbReference>
<dbReference type="GeneID" id="4379834"/>
<dbReference type="KEGG" id="dme:Dmel_CG12473"/>
<dbReference type="UCSC" id="CG12473-RB">
    <property type="organism name" value="d. melanogaster"/>
</dbReference>
<dbReference type="AGR" id="FB:FBgn0016975"/>
<dbReference type="CTD" id="4379834"/>
<dbReference type="FlyBase" id="FBgn0016975">
    <property type="gene designation" value="stnB"/>
</dbReference>
<dbReference type="VEuPathDB" id="VectorBase:FBgn0016975"/>
<dbReference type="eggNOG" id="KOG2677">
    <property type="taxonomic scope" value="Eukaryota"/>
</dbReference>
<dbReference type="InParanoid" id="Q24212"/>
<dbReference type="OMA" id="PCEDVSI"/>
<dbReference type="OrthoDB" id="10063141at2759"/>
<dbReference type="PhylomeDB" id="Q24212"/>
<dbReference type="Reactome" id="R-DME-8856825">
    <property type="pathway name" value="Cargo recognition for clathrin-mediated endocytosis"/>
</dbReference>
<dbReference type="Reactome" id="R-DME-8856828">
    <property type="pathway name" value="Clathrin-mediated endocytosis"/>
</dbReference>
<dbReference type="BioGRID-ORCS" id="4379834">
    <property type="hits" value="0 hits in 3 CRISPR screens"/>
</dbReference>
<dbReference type="GenomeRNAi" id="4379834"/>
<dbReference type="PRO" id="PR:Q24212"/>
<dbReference type="Proteomes" id="UP000000803">
    <property type="component" value="Chromosome X"/>
</dbReference>
<dbReference type="Bgee" id="FBgn0016975">
    <property type="expression patterns" value="Expressed in insect adult head and 5 other cell types or tissues"/>
</dbReference>
<dbReference type="GO" id="GO:0030122">
    <property type="term" value="C:AP-2 adaptor complex"/>
    <property type="evidence" value="ECO:0000318"/>
    <property type="project" value="GO_Central"/>
</dbReference>
<dbReference type="GO" id="GO:0030139">
    <property type="term" value="C:endocytic vesicle"/>
    <property type="evidence" value="ECO:0000314"/>
    <property type="project" value="UniProtKB"/>
</dbReference>
<dbReference type="GO" id="GO:0048786">
    <property type="term" value="C:presynaptic active zone"/>
    <property type="evidence" value="ECO:0000314"/>
    <property type="project" value="FlyBase"/>
</dbReference>
<dbReference type="GO" id="GO:0008021">
    <property type="term" value="C:synaptic vesicle"/>
    <property type="evidence" value="ECO:0000316"/>
    <property type="project" value="FlyBase"/>
</dbReference>
<dbReference type="GO" id="GO:0035615">
    <property type="term" value="F:clathrin adaptor activity"/>
    <property type="evidence" value="ECO:0000318"/>
    <property type="project" value="GO_Central"/>
</dbReference>
<dbReference type="GO" id="GO:0097110">
    <property type="term" value="F:scaffold protein binding"/>
    <property type="evidence" value="ECO:0000353"/>
    <property type="project" value="FlyBase"/>
</dbReference>
<dbReference type="GO" id="GO:0007268">
    <property type="term" value="P:chemical synaptic transmission"/>
    <property type="evidence" value="ECO:0000315"/>
    <property type="project" value="FlyBase"/>
</dbReference>
<dbReference type="GO" id="GO:0072583">
    <property type="term" value="P:clathrin-dependent endocytosis"/>
    <property type="evidence" value="ECO:0000318"/>
    <property type="project" value="GO_Central"/>
</dbReference>
<dbReference type="GO" id="GO:0030100">
    <property type="term" value="P:regulation of endocytosis"/>
    <property type="evidence" value="ECO:0000318"/>
    <property type="project" value="GO_Central"/>
</dbReference>
<dbReference type="GO" id="GO:1900242">
    <property type="term" value="P:regulation of synaptic vesicle endocytosis"/>
    <property type="evidence" value="ECO:0000315"/>
    <property type="project" value="FlyBase"/>
</dbReference>
<dbReference type="GO" id="GO:0099504">
    <property type="term" value="P:synaptic vesicle cycle"/>
    <property type="evidence" value="ECO:0000270"/>
    <property type="project" value="FlyBase"/>
</dbReference>
<dbReference type="GO" id="GO:0048488">
    <property type="term" value="P:synaptic vesicle endocytosis"/>
    <property type="evidence" value="ECO:0000315"/>
    <property type="project" value="UniProtKB"/>
</dbReference>
<dbReference type="GO" id="GO:0048489">
    <property type="term" value="P:synaptic vesicle transport"/>
    <property type="evidence" value="ECO:0000315"/>
    <property type="project" value="UniProtKB"/>
</dbReference>
<dbReference type="FunFam" id="2.60.40.1170:FF:000016">
    <property type="entry name" value="AP-1 complex subunit mu"/>
    <property type="match status" value="1"/>
</dbReference>
<dbReference type="FunFam" id="2.60.40.1170:FF:000022">
    <property type="entry name" value="AP-1 complex subunit mu"/>
    <property type="match status" value="1"/>
</dbReference>
<dbReference type="FunFam" id="2.60.40.1170:FF:000018">
    <property type="entry name" value="stonin-2 isoform X2"/>
    <property type="match status" value="1"/>
</dbReference>
<dbReference type="Gene3D" id="2.60.40.1170">
    <property type="entry name" value="Mu homology domain, subdomain B"/>
    <property type="match status" value="1"/>
</dbReference>
<dbReference type="InterPro" id="IPR050431">
    <property type="entry name" value="Adaptor_comp_med_subunit"/>
</dbReference>
<dbReference type="InterPro" id="IPR036168">
    <property type="entry name" value="AP2_Mu_C_sf"/>
</dbReference>
<dbReference type="InterPro" id="IPR028565">
    <property type="entry name" value="MHD"/>
</dbReference>
<dbReference type="InterPro" id="IPR012320">
    <property type="entry name" value="SHD_dom"/>
</dbReference>
<dbReference type="InterPro" id="IPR017110">
    <property type="entry name" value="Stonin"/>
</dbReference>
<dbReference type="PANTHER" id="PTHR10529">
    <property type="entry name" value="AP COMPLEX SUBUNIT MU"/>
    <property type="match status" value="1"/>
</dbReference>
<dbReference type="Pfam" id="PF00928">
    <property type="entry name" value="Adap_comp_sub"/>
    <property type="match status" value="1"/>
</dbReference>
<dbReference type="PIRSF" id="PIRSF037099">
    <property type="entry name" value="Stonin"/>
    <property type="match status" value="1"/>
</dbReference>
<dbReference type="SUPFAM" id="SSF49447">
    <property type="entry name" value="Second domain of Mu2 adaptin subunit (ap50) of ap2 adaptor"/>
    <property type="match status" value="1"/>
</dbReference>
<dbReference type="PROSITE" id="PS51072">
    <property type="entry name" value="MHD"/>
    <property type="match status" value="1"/>
</dbReference>
<dbReference type="PROSITE" id="PS51070">
    <property type="entry name" value="SHD"/>
    <property type="match status" value="1"/>
</dbReference>
<organism>
    <name type="scientific">Drosophila melanogaster</name>
    <name type="common">Fruit fly</name>
    <dbReference type="NCBI Taxonomy" id="7227"/>
    <lineage>
        <taxon>Eukaryota</taxon>
        <taxon>Metazoa</taxon>
        <taxon>Ecdysozoa</taxon>
        <taxon>Arthropoda</taxon>
        <taxon>Hexapoda</taxon>
        <taxon>Insecta</taxon>
        <taxon>Pterygota</taxon>
        <taxon>Neoptera</taxon>
        <taxon>Endopterygota</taxon>
        <taxon>Diptera</taxon>
        <taxon>Brachycera</taxon>
        <taxon>Muscomorpha</taxon>
        <taxon>Ephydroidea</taxon>
        <taxon>Drosophilidae</taxon>
        <taxon>Drosophila</taxon>
        <taxon>Sophophora</taxon>
    </lineage>
</organism>
<reference key="1">
    <citation type="journal article" date="1996" name="Genetics">
        <title>The stoned locus of Drosophila melanogaster produces a dicistronic transcript and encodes two distinct polypeptides.</title>
        <authorList>
            <person name="Andrews J."/>
            <person name="Smith M."/>
            <person name="Merakovsky J."/>
            <person name="Coulson M."/>
            <person name="Hannan F."/>
            <person name="Kelly L.E."/>
        </authorList>
    </citation>
    <scope>NUCLEOTIDE SEQUENCE [MRNA]</scope>
    <source>
        <strain>Oregon-R</strain>
        <tissue>CNS</tissue>
    </source>
</reference>
<reference key="2">
    <citation type="journal article" date="2000" name="Science">
        <title>The genome sequence of Drosophila melanogaster.</title>
        <authorList>
            <person name="Adams M.D."/>
            <person name="Celniker S.E."/>
            <person name="Holt R.A."/>
            <person name="Evans C.A."/>
            <person name="Gocayne J.D."/>
            <person name="Amanatides P.G."/>
            <person name="Scherer S.E."/>
            <person name="Li P.W."/>
            <person name="Hoskins R.A."/>
            <person name="Galle R.F."/>
            <person name="George R.A."/>
            <person name="Lewis S.E."/>
            <person name="Richards S."/>
            <person name="Ashburner M."/>
            <person name="Henderson S.N."/>
            <person name="Sutton G.G."/>
            <person name="Wortman J.R."/>
            <person name="Yandell M.D."/>
            <person name="Zhang Q."/>
            <person name="Chen L.X."/>
            <person name="Brandon R.C."/>
            <person name="Rogers Y.-H.C."/>
            <person name="Blazej R.G."/>
            <person name="Champe M."/>
            <person name="Pfeiffer B.D."/>
            <person name="Wan K.H."/>
            <person name="Doyle C."/>
            <person name="Baxter E.G."/>
            <person name="Helt G."/>
            <person name="Nelson C.R."/>
            <person name="Miklos G.L.G."/>
            <person name="Abril J.F."/>
            <person name="Agbayani A."/>
            <person name="An H.-J."/>
            <person name="Andrews-Pfannkoch C."/>
            <person name="Baldwin D."/>
            <person name="Ballew R.M."/>
            <person name="Basu A."/>
            <person name="Baxendale J."/>
            <person name="Bayraktaroglu L."/>
            <person name="Beasley E.M."/>
            <person name="Beeson K.Y."/>
            <person name="Benos P.V."/>
            <person name="Berman B.P."/>
            <person name="Bhandari D."/>
            <person name="Bolshakov S."/>
            <person name="Borkova D."/>
            <person name="Botchan M.R."/>
            <person name="Bouck J."/>
            <person name="Brokstein P."/>
            <person name="Brottier P."/>
            <person name="Burtis K.C."/>
            <person name="Busam D.A."/>
            <person name="Butler H."/>
            <person name="Cadieu E."/>
            <person name="Center A."/>
            <person name="Chandra I."/>
            <person name="Cherry J.M."/>
            <person name="Cawley S."/>
            <person name="Dahlke C."/>
            <person name="Davenport L.B."/>
            <person name="Davies P."/>
            <person name="de Pablos B."/>
            <person name="Delcher A."/>
            <person name="Deng Z."/>
            <person name="Mays A.D."/>
            <person name="Dew I."/>
            <person name="Dietz S.M."/>
            <person name="Dodson K."/>
            <person name="Doup L.E."/>
            <person name="Downes M."/>
            <person name="Dugan-Rocha S."/>
            <person name="Dunkov B.C."/>
            <person name="Dunn P."/>
            <person name="Durbin K.J."/>
            <person name="Evangelista C.C."/>
            <person name="Ferraz C."/>
            <person name="Ferriera S."/>
            <person name="Fleischmann W."/>
            <person name="Fosler C."/>
            <person name="Gabrielian A.E."/>
            <person name="Garg N.S."/>
            <person name="Gelbart W.M."/>
            <person name="Glasser K."/>
            <person name="Glodek A."/>
            <person name="Gong F."/>
            <person name="Gorrell J.H."/>
            <person name="Gu Z."/>
            <person name="Guan P."/>
            <person name="Harris M."/>
            <person name="Harris N.L."/>
            <person name="Harvey D.A."/>
            <person name="Heiman T.J."/>
            <person name="Hernandez J.R."/>
            <person name="Houck J."/>
            <person name="Hostin D."/>
            <person name="Houston K.A."/>
            <person name="Howland T.J."/>
            <person name="Wei M.-H."/>
            <person name="Ibegwam C."/>
            <person name="Jalali M."/>
            <person name="Kalush F."/>
            <person name="Karpen G.H."/>
            <person name="Ke Z."/>
            <person name="Kennison J.A."/>
            <person name="Ketchum K.A."/>
            <person name="Kimmel B.E."/>
            <person name="Kodira C.D."/>
            <person name="Kraft C.L."/>
            <person name="Kravitz S."/>
            <person name="Kulp D."/>
            <person name="Lai Z."/>
            <person name="Lasko P."/>
            <person name="Lei Y."/>
            <person name="Levitsky A.A."/>
            <person name="Li J.H."/>
            <person name="Li Z."/>
            <person name="Liang Y."/>
            <person name="Lin X."/>
            <person name="Liu X."/>
            <person name="Mattei B."/>
            <person name="McIntosh T.C."/>
            <person name="McLeod M.P."/>
            <person name="McPherson D."/>
            <person name="Merkulov G."/>
            <person name="Milshina N.V."/>
            <person name="Mobarry C."/>
            <person name="Morris J."/>
            <person name="Moshrefi A."/>
            <person name="Mount S.M."/>
            <person name="Moy M."/>
            <person name="Murphy B."/>
            <person name="Murphy L."/>
            <person name="Muzny D.M."/>
            <person name="Nelson D.L."/>
            <person name="Nelson D.R."/>
            <person name="Nelson K.A."/>
            <person name="Nixon K."/>
            <person name="Nusskern D.R."/>
            <person name="Pacleb J.M."/>
            <person name="Palazzolo M."/>
            <person name="Pittman G.S."/>
            <person name="Pan S."/>
            <person name="Pollard J."/>
            <person name="Puri V."/>
            <person name="Reese M.G."/>
            <person name="Reinert K."/>
            <person name="Remington K."/>
            <person name="Saunders R.D.C."/>
            <person name="Scheeler F."/>
            <person name="Shen H."/>
            <person name="Shue B.C."/>
            <person name="Siden-Kiamos I."/>
            <person name="Simpson M."/>
            <person name="Skupski M.P."/>
            <person name="Smith T.J."/>
            <person name="Spier E."/>
            <person name="Spradling A.C."/>
            <person name="Stapleton M."/>
            <person name="Strong R."/>
            <person name="Sun E."/>
            <person name="Svirskas R."/>
            <person name="Tector C."/>
            <person name="Turner R."/>
            <person name="Venter E."/>
            <person name="Wang A.H."/>
            <person name="Wang X."/>
            <person name="Wang Z.-Y."/>
            <person name="Wassarman D.A."/>
            <person name="Weinstock G.M."/>
            <person name="Weissenbach J."/>
            <person name="Williams S.M."/>
            <person name="Woodage T."/>
            <person name="Worley K.C."/>
            <person name="Wu D."/>
            <person name="Yang S."/>
            <person name="Yao Q.A."/>
            <person name="Ye J."/>
            <person name="Yeh R.-F."/>
            <person name="Zaveri J.S."/>
            <person name="Zhan M."/>
            <person name="Zhang G."/>
            <person name="Zhao Q."/>
            <person name="Zheng L."/>
            <person name="Zheng X.H."/>
            <person name="Zhong F.N."/>
            <person name="Zhong W."/>
            <person name="Zhou X."/>
            <person name="Zhu S.C."/>
            <person name="Zhu X."/>
            <person name="Smith H.O."/>
            <person name="Gibbs R.A."/>
            <person name="Myers E.W."/>
            <person name="Rubin G.M."/>
            <person name="Venter J.C."/>
        </authorList>
    </citation>
    <scope>NUCLEOTIDE SEQUENCE [LARGE SCALE GENOMIC DNA]</scope>
    <source>
        <strain>Berkeley</strain>
    </source>
</reference>
<reference key="3">
    <citation type="journal article" date="2002" name="Genome Biol.">
        <title>Annotation of the Drosophila melanogaster euchromatic genome: a systematic review.</title>
        <authorList>
            <person name="Misra S."/>
            <person name="Crosby M.A."/>
            <person name="Mungall C.J."/>
            <person name="Matthews B.B."/>
            <person name="Campbell K.S."/>
            <person name="Hradecky P."/>
            <person name="Huang Y."/>
            <person name="Kaminker J.S."/>
            <person name="Millburn G.H."/>
            <person name="Prochnik S.E."/>
            <person name="Smith C.D."/>
            <person name="Tupy J.L."/>
            <person name="Whitfield E.J."/>
            <person name="Bayraktaroglu L."/>
            <person name="Berman B.P."/>
            <person name="Bettencourt B.R."/>
            <person name="Celniker S.E."/>
            <person name="de Grey A.D.N.J."/>
            <person name="Drysdale R.A."/>
            <person name="Harris N.L."/>
            <person name="Richter J."/>
            <person name="Russo S."/>
            <person name="Schroeder A.J."/>
            <person name="Shu S.Q."/>
            <person name="Stapleton M."/>
            <person name="Yamada C."/>
            <person name="Ashburner M."/>
            <person name="Gelbart W.M."/>
            <person name="Rubin G.M."/>
            <person name="Lewis S.E."/>
        </authorList>
    </citation>
    <scope>GENOME REANNOTATION</scope>
    <source>
        <strain>Berkeley</strain>
    </source>
</reference>
<reference key="4">
    <citation type="journal article" date="1999" name="J. Neurosci.">
        <title>The stoned proteins regulate synaptic vesicle recycling in the presynaptic terminal.</title>
        <authorList>
            <person name="Fergestad T."/>
            <person name="Davis W.S."/>
            <person name="Broadie K."/>
        </authorList>
    </citation>
    <scope>FUNCTION</scope>
    <scope>SUBCELLULAR LOCATION</scope>
    <scope>DEVELOPMENTAL STAGE</scope>
</reference>
<reference key="5">
    <citation type="journal article" date="2000" name="J. Neurosci.">
        <title>The products of the Drosophila stoned locus interact with synaptic vesicles via synaptotagmin.</title>
        <authorList>
            <person name="Phillips A.M."/>
            <person name="Smith M."/>
            <person name="Ramaswami M."/>
            <person name="Kelly L.E."/>
        </authorList>
    </citation>
    <scope>INTERACTION WITH SYT</scope>
</reference>
<reference key="6">
    <citation type="journal article" date="2001" name="J. Neurosci.">
        <title>Interaction of stoned and synaptotagmin in synaptic vesicle endocytosis.</title>
        <authorList>
            <person name="Fergestad T."/>
            <person name="Broadie K."/>
        </authorList>
    </citation>
    <scope>FUNCTION</scope>
    <scope>SUBCELLULAR LOCATION</scope>
</reference>
<reference key="7">
    <citation type="journal article" date="2001" name="J. Neurosci.">
        <title>Drosophila stoned proteins regulate the rate and fidelity of synaptic vesicle internalization.</title>
        <authorList>
            <person name="Stimson D.T."/>
            <person name="Estes P.S."/>
            <person name="Rao S."/>
            <person name="Krishnan K.S."/>
            <person name="Kelly L.E."/>
            <person name="Ramaswami M."/>
        </authorList>
    </citation>
    <scope>FUNCTION</scope>
</reference>
<reference key="8">
    <citation type="journal article" date="2003" name="Science">
        <title>Nervous system targets of RNA editing identified by comparative genomics.</title>
        <authorList>
            <person name="Hoopengardner B."/>
            <person name="Bhalla T."/>
            <person name="Staber C."/>
            <person name="Reenan R."/>
        </authorList>
    </citation>
    <scope>RNA EDITING OF POSITION 1186</scope>
</reference>
<reference key="9">
    <citation type="journal article" date="2008" name="J. Proteome Res.">
        <title>Phosphoproteome analysis of Drosophila melanogaster embryos.</title>
        <authorList>
            <person name="Zhai B."/>
            <person name="Villen J."/>
            <person name="Beausoleil S.A."/>
            <person name="Mintseris J."/>
            <person name="Gygi S.P."/>
        </authorList>
    </citation>
    <scope>PHOSPHORYLATION [LARGE SCALE ANALYSIS] AT SER-623 AND SER-626</scope>
    <scope>IDENTIFICATION BY MASS SPECTROMETRY</scope>
    <source>
        <tissue>Embryo</tissue>
    </source>
</reference>
<feature type="chain" id="PRO_0000185735" description="Protein stoned-B">
    <location>
        <begin position="1"/>
        <end position="1262"/>
    </location>
</feature>
<feature type="domain" description="SHD" evidence="2">
    <location>
        <begin position="728"/>
        <end position="902"/>
    </location>
</feature>
<feature type="domain" description="MHD" evidence="3">
    <location>
        <begin position="906"/>
        <end position="1219"/>
    </location>
</feature>
<feature type="region of interest" description="Disordered" evidence="4">
    <location>
        <begin position="17"/>
        <end position="36"/>
    </location>
</feature>
<feature type="region of interest" description="Disordered" evidence="4">
    <location>
        <begin position="49"/>
        <end position="189"/>
    </location>
</feature>
<feature type="region of interest" description="Disordered" evidence="4">
    <location>
        <begin position="225"/>
        <end position="452"/>
    </location>
</feature>
<feature type="region of interest" description="Disordered" evidence="4">
    <location>
        <begin position="474"/>
        <end position="507"/>
    </location>
</feature>
<feature type="region of interest" description="Disordered" evidence="4">
    <location>
        <begin position="643"/>
        <end position="709"/>
    </location>
</feature>
<feature type="region of interest" description="Interaction with Syt">
    <location>
        <begin position="847"/>
        <end position="1108"/>
    </location>
</feature>
<feature type="region of interest" description="Disordered" evidence="4">
    <location>
        <begin position="1226"/>
        <end position="1262"/>
    </location>
</feature>
<feature type="short sequence motif" description="NPF 1">
    <location>
        <begin position="3"/>
        <end position="5"/>
    </location>
</feature>
<feature type="short sequence motif" description="NPF 2">
    <location>
        <begin position="19"/>
        <end position="21"/>
    </location>
</feature>
<feature type="short sequence motif" description="NPF 3">
    <location>
        <begin position="33"/>
        <end position="35"/>
    </location>
</feature>
<feature type="short sequence motif" description="NPF 4">
    <location>
        <begin position="43"/>
        <end position="45"/>
    </location>
</feature>
<feature type="short sequence motif" description="NPF 5">
    <location>
        <begin position="210"/>
        <end position="212"/>
    </location>
</feature>
<feature type="short sequence motif" description="NPF 6">
    <location>
        <begin position="493"/>
        <end position="495"/>
    </location>
</feature>
<feature type="short sequence motif" description="NPF 7">
    <location>
        <begin position="673"/>
        <end position="675"/>
    </location>
</feature>
<feature type="compositionally biased region" description="Acidic residues" evidence="4">
    <location>
        <begin position="50"/>
        <end position="60"/>
    </location>
</feature>
<feature type="compositionally biased region" description="Low complexity" evidence="4">
    <location>
        <begin position="101"/>
        <end position="111"/>
    </location>
</feature>
<feature type="compositionally biased region" description="Pro residues" evidence="4">
    <location>
        <begin position="115"/>
        <end position="124"/>
    </location>
</feature>
<feature type="compositionally biased region" description="Polar residues" evidence="4">
    <location>
        <begin position="128"/>
        <end position="145"/>
    </location>
</feature>
<feature type="compositionally biased region" description="Low complexity" evidence="4">
    <location>
        <begin position="172"/>
        <end position="189"/>
    </location>
</feature>
<feature type="compositionally biased region" description="Pro residues" evidence="4">
    <location>
        <begin position="233"/>
        <end position="272"/>
    </location>
</feature>
<feature type="compositionally biased region" description="Acidic residues" evidence="4">
    <location>
        <begin position="325"/>
        <end position="345"/>
    </location>
</feature>
<feature type="compositionally biased region" description="Polar residues" evidence="4">
    <location>
        <begin position="384"/>
        <end position="401"/>
    </location>
</feature>
<feature type="compositionally biased region" description="Acidic residues" evidence="4">
    <location>
        <begin position="417"/>
        <end position="429"/>
    </location>
</feature>
<feature type="compositionally biased region" description="Low complexity" evidence="4">
    <location>
        <begin position="1241"/>
        <end position="1254"/>
    </location>
</feature>
<feature type="modified residue" description="Phosphoserine" evidence="10">
    <location>
        <position position="623"/>
    </location>
</feature>
<feature type="modified residue" description="Phosphoserine" evidence="10">
    <location>
        <position position="626"/>
    </location>
</feature>
<feature type="sequence variant" description="In RNA edited version.">
    <original>T</original>
    <variation>A</variation>
    <location>
        <position position="1186"/>
    </location>
</feature>
<feature type="sequence conflict" description="In Ref. 1; AAC16666." evidence="11" ref="1">
    <original>RG</original>
    <variation>VE</variation>
    <location>
        <begin position="657"/>
        <end position="658"/>
    </location>
</feature>
<feature type="sequence conflict" description="In Ref. 1; AAC16666." evidence="11" ref="1">
    <original>L</original>
    <variation>V</variation>
    <location>
        <position position="1012"/>
    </location>
</feature>
<keyword id="KW-0963">Cytoplasm</keyword>
<keyword id="KW-0254">Endocytosis</keyword>
<keyword id="KW-0597">Phosphoprotein</keyword>
<keyword id="KW-1185">Reference proteome</keyword>
<keyword id="KW-0677">Repeat</keyword>
<keyword id="KW-0691">RNA editing</keyword>
<keyword id="KW-0770">Synapse</keyword>
<protein>
    <recommendedName>
        <fullName>Protein stoned-B</fullName>
        <shortName>Stn-B</shortName>
        <shortName>StonedB</shortName>
    </recommendedName>
</protein>